<name>NFUA_ACIAD</name>
<sequence length="212" mass="22998">MSTENTSTAVAEEIPNLLITPSAQEYLGDLLEKQNTPGIGVRIFVENPGTPRAECCMAYSAPDEVNPADYKQEYSDFPAYIDAPSIPYLLDAVIDYNKDRFGGQLTFRAPNSKVPRVGPDASIEERITYILQSEINPGLAGHGGNCALVEVQDDPENGLTAVLKFGGGCQGCSAIDVTLKQGVETTLRQQIPELQRVVDQTDHTQAEGAYFK</sequence>
<organism>
    <name type="scientific">Acinetobacter baylyi (strain ATCC 33305 / BD413 / ADP1)</name>
    <dbReference type="NCBI Taxonomy" id="62977"/>
    <lineage>
        <taxon>Bacteria</taxon>
        <taxon>Pseudomonadati</taxon>
        <taxon>Pseudomonadota</taxon>
        <taxon>Gammaproteobacteria</taxon>
        <taxon>Moraxellales</taxon>
        <taxon>Moraxellaceae</taxon>
        <taxon>Acinetobacter</taxon>
    </lineage>
</organism>
<keyword id="KW-0004">4Fe-4S</keyword>
<keyword id="KW-0408">Iron</keyword>
<keyword id="KW-0411">Iron-sulfur</keyword>
<keyword id="KW-0479">Metal-binding</keyword>
<comment type="function">
    <text evidence="1">Involved in iron-sulfur cluster biogenesis. Binds a 4Fe-4S cluster, can transfer this cluster to apoproteins, and thereby intervenes in the maturation of Fe/S proteins. Could also act as a scaffold/chaperone for damaged Fe/S proteins.</text>
</comment>
<comment type="cofactor">
    <cofactor evidence="1">
        <name>[4Fe-4S] cluster</name>
        <dbReference type="ChEBI" id="CHEBI:49883"/>
    </cofactor>
    <text evidence="1">Binds 1 [4Fe-4S] cluster per subunit. The cluster is presumably bound at the interface of two monomers.</text>
</comment>
<comment type="subunit">
    <text evidence="1">Homodimer.</text>
</comment>
<comment type="similarity">
    <text evidence="1">Belongs to the NfuA family.</text>
</comment>
<evidence type="ECO:0000255" key="1">
    <source>
        <dbReference type="HAMAP-Rule" id="MF_01637"/>
    </source>
</evidence>
<protein>
    <recommendedName>
        <fullName evidence="1">Fe/S biogenesis protein NfuA</fullName>
    </recommendedName>
</protein>
<dbReference type="EMBL" id="CR543861">
    <property type="protein sequence ID" value="CAG67940.1"/>
    <property type="molecule type" value="Genomic_DNA"/>
</dbReference>
<dbReference type="RefSeq" id="WP_004921688.1">
    <property type="nucleotide sequence ID" value="NC_005966.1"/>
</dbReference>
<dbReference type="SMR" id="Q6FDB8"/>
<dbReference type="STRING" id="202950.GCA_001485005_01313"/>
<dbReference type="GeneID" id="45233494"/>
<dbReference type="KEGG" id="aci:ACIAD1052"/>
<dbReference type="eggNOG" id="COG0694">
    <property type="taxonomic scope" value="Bacteria"/>
</dbReference>
<dbReference type="HOGENOM" id="CLU_094569_0_0_6"/>
<dbReference type="OrthoDB" id="9785450at2"/>
<dbReference type="BioCyc" id="ASP62977:ACIAD_RS04845-MONOMER"/>
<dbReference type="Proteomes" id="UP000000430">
    <property type="component" value="Chromosome"/>
</dbReference>
<dbReference type="GO" id="GO:0051539">
    <property type="term" value="F:4 iron, 4 sulfur cluster binding"/>
    <property type="evidence" value="ECO:0007669"/>
    <property type="project" value="UniProtKB-UniRule"/>
</dbReference>
<dbReference type="GO" id="GO:0005506">
    <property type="term" value="F:iron ion binding"/>
    <property type="evidence" value="ECO:0007669"/>
    <property type="project" value="InterPro"/>
</dbReference>
<dbReference type="GO" id="GO:0016226">
    <property type="term" value="P:iron-sulfur cluster assembly"/>
    <property type="evidence" value="ECO:0007669"/>
    <property type="project" value="UniProtKB-UniRule"/>
</dbReference>
<dbReference type="GO" id="GO:0051604">
    <property type="term" value="P:protein maturation"/>
    <property type="evidence" value="ECO:0007669"/>
    <property type="project" value="UniProtKB-UniRule"/>
</dbReference>
<dbReference type="Gene3D" id="3.30.300.130">
    <property type="entry name" value="Fe-S cluster assembly (FSCA)"/>
    <property type="match status" value="1"/>
</dbReference>
<dbReference type="Gene3D" id="2.60.300.12">
    <property type="entry name" value="HesB-like domain"/>
    <property type="match status" value="1"/>
</dbReference>
<dbReference type="HAMAP" id="MF_01637">
    <property type="entry name" value="Fe_S_biogen_NfuA"/>
    <property type="match status" value="1"/>
</dbReference>
<dbReference type="InterPro" id="IPR017726">
    <property type="entry name" value="Fe/S_biogenesis_protein_NfuA"/>
</dbReference>
<dbReference type="InterPro" id="IPR000361">
    <property type="entry name" value="FeS_biogenesis"/>
</dbReference>
<dbReference type="InterPro" id="IPR034904">
    <property type="entry name" value="FSCA_dom_sf"/>
</dbReference>
<dbReference type="InterPro" id="IPR035903">
    <property type="entry name" value="HesB-like_dom_sf"/>
</dbReference>
<dbReference type="InterPro" id="IPR001075">
    <property type="entry name" value="NIF_FeS_clus_asmbl_NifU_C"/>
</dbReference>
<dbReference type="NCBIfam" id="TIGR03341">
    <property type="entry name" value="YhgI_GntY"/>
    <property type="match status" value="1"/>
</dbReference>
<dbReference type="PANTHER" id="PTHR11178:SF51">
    <property type="entry name" value="FE_S BIOGENESIS PROTEIN NFUA"/>
    <property type="match status" value="1"/>
</dbReference>
<dbReference type="PANTHER" id="PTHR11178">
    <property type="entry name" value="IRON-SULFUR CLUSTER SCAFFOLD PROTEIN NFU-RELATED"/>
    <property type="match status" value="1"/>
</dbReference>
<dbReference type="Pfam" id="PF01521">
    <property type="entry name" value="Fe-S_biosyn"/>
    <property type="match status" value="1"/>
</dbReference>
<dbReference type="Pfam" id="PF01106">
    <property type="entry name" value="NifU"/>
    <property type="match status" value="1"/>
</dbReference>
<dbReference type="SUPFAM" id="SSF117916">
    <property type="entry name" value="Fe-S cluster assembly (FSCA) domain-like"/>
    <property type="match status" value="1"/>
</dbReference>
<dbReference type="SUPFAM" id="SSF89360">
    <property type="entry name" value="HesB-like domain"/>
    <property type="match status" value="1"/>
</dbReference>
<accession>Q6FDB8</accession>
<feature type="chain" id="PRO_0000209470" description="Fe/S biogenesis protein NfuA">
    <location>
        <begin position="1"/>
        <end position="212"/>
    </location>
</feature>
<feature type="binding site" evidence="1">
    <location>
        <position position="169"/>
    </location>
    <ligand>
        <name>[4Fe-4S] cluster</name>
        <dbReference type="ChEBI" id="CHEBI:49883"/>
    </ligand>
</feature>
<feature type="binding site" evidence="1">
    <location>
        <position position="172"/>
    </location>
    <ligand>
        <name>[4Fe-4S] cluster</name>
        <dbReference type="ChEBI" id="CHEBI:49883"/>
    </ligand>
</feature>
<gene>
    <name evidence="1" type="primary">nfuA</name>
    <name type="ordered locus">ACIAD1052</name>
</gene>
<reference key="1">
    <citation type="journal article" date="2004" name="Nucleic Acids Res.">
        <title>Unique features revealed by the genome sequence of Acinetobacter sp. ADP1, a versatile and naturally transformation competent bacterium.</title>
        <authorList>
            <person name="Barbe V."/>
            <person name="Vallenet D."/>
            <person name="Fonknechten N."/>
            <person name="Kreimeyer A."/>
            <person name="Oztas S."/>
            <person name="Labarre L."/>
            <person name="Cruveiller S."/>
            <person name="Robert C."/>
            <person name="Duprat S."/>
            <person name="Wincker P."/>
            <person name="Ornston L.N."/>
            <person name="Weissenbach J."/>
            <person name="Marliere P."/>
            <person name="Cohen G.N."/>
            <person name="Medigue C."/>
        </authorList>
    </citation>
    <scope>NUCLEOTIDE SEQUENCE [LARGE SCALE GENOMIC DNA]</scope>
    <source>
        <strain>ATCC 33305 / BD413 / ADP1</strain>
    </source>
</reference>
<proteinExistence type="inferred from homology"/>